<dbReference type="EMBL" id="CP000753">
    <property type="protein sequence ID" value="ABS10493.1"/>
    <property type="molecule type" value="Genomic_DNA"/>
</dbReference>
<dbReference type="RefSeq" id="WP_006083830.1">
    <property type="nucleotide sequence ID" value="NC_009665.1"/>
</dbReference>
<dbReference type="SMR" id="A6WUK4"/>
<dbReference type="KEGG" id="sbm:Shew185_4379"/>
<dbReference type="HOGENOM" id="CLU_016535_3_0_6"/>
<dbReference type="GO" id="GO:0005886">
    <property type="term" value="C:plasma membrane"/>
    <property type="evidence" value="ECO:0007669"/>
    <property type="project" value="UniProtKB-SubCell"/>
</dbReference>
<dbReference type="GO" id="GO:0032977">
    <property type="term" value="F:membrane insertase activity"/>
    <property type="evidence" value="ECO:0007669"/>
    <property type="project" value="InterPro"/>
</dbReference>
<dbReference type="GO" id="GO:0051205">
    <property type="term" value="P:protein insertion into membrane"/>
    <property type="evidence" value="ECO:0007669"/>
    <property type="project" value="TreeGrafter"/>
</dbReference>
<dbReference type="GO" id="GO:0015031">
    <property type="term" value="P:protein transport"/>
    <property type="evidence" value="ECO:0007669"/>
    <property type="project" value="UniProtKB-KW"/>
</dbReference>
<dbReference type="CDD" id="cd20070">
    <property type="entry name" value="5TM_YidC_Alb3"/>
    <property type="match status" value="1"/>
</dbReference>
<dbReference type="CDD" id="cd19961">
    <property type="entry name" value="EcYidC-like_peri"/>
    <property type="match status" value="1"/>
</dbReference>
<dbReference type="FunFam" id="2.70.98.90:FF:000004">
    <property type="entry name" value="Membrane protein insertase YidC"/>
    <property type="match status" value="1"/>
</dbReference>
<dbReference type="Gene3D" id="2.70.98.90">
    <property type="match status" value="1"/>
</dbReference>
<dbReference type="HAMAP" id="MF_01810">
    <property type="entry name" value="YidC_type1"/>
    <property type="match status" value="1"/>
</dbReference>
<dbReference type="InterPro" id="IPR019998">
    <property type="entry name" value="Membr_insert_YidC"/>
</dbReference>
<dbReference type="InterPro" id="IPR028053">
    <property type="entry name" value="Membr_insert_YidC_N"/>
</dbReference>
<dbReference type="InterPro" id="IPR001708">
    <property type="entry name" value="YidC/ALB3/OXA1/COX18"/>
</dbReference>
<dbReference type="InterPro" id="IPR028055">
    <property type="entry name" value="YidC/Oxa/ALB_C"/>
</dbReference>
<dbReference type="InterPro" id="IPR047196">
    <property type="entry name" value="YidC_ALB_C"/>
</dbReference>
<dbReference type="InterPro" id="IPR038221">
    <property type="entry name" value="YidC_periplasmic_sf"/>
</dbReference>
<dbReference type="NCBIfam" id="NF002351">
    <property type="entry name" value="PRK01318.1-1"/>
    <property type="match status" value="1"/>
</dbReference>
<dbReference type="NCBIfam" id="NF002352">
    <property type="entry name" value="PRK01318.1-3"/>
    <property type="match status" value="1"/>
</dbReference>
<dbReference type="NCBIfam" id="TIGR03593">
    <property type="entry name" value="yidC_nterm"/>
    <property type="match status" value="1"/>
</dbReference>
<dbReference type="NCBIfam" id="TIGR03592">
    <property type="entry name" value="yidC_oxa1_cterm"/>
    <property type="match status" value="1"/>
</dbReference>
<dbReference type="PANTHER" id="PTHR12428:SF65">
    <property type="entry name" value="CYTOCHROME C OXIDASE ASSEMBLY PROTEIN COX18, MITOCHONDRIAL"/>
    <property type="match status" value="1"/>
</dbReference>
<dbReference type="PANTHER" id="PTHR12428">
    <property type="entry name" value="OXA1"/>
    <property type="match status" value="1"/>
</dbReference>
<dbReference type="Pfam" id="PF02096">
    <property type="entry name" value="60KD_IMP"/>
    <property type="match status" value="1"/>
</dbReference>
<dbReference type="Pfam" id="PF14849">
    <property type="entry name" value="YidC_periplas"/>
    <property type="match status" value="1"/>
</dbReference>
<dbReference type="PRINTS" id="PR00701">
    <property type="entry name" value="60KDINNERMP"/>
</dbReference>
<dbReference type="PRINTS" id="PR01900">
    <property type="entry name" value="YIDCPROTEIN"/>
</dbReference>
<keyword id="KW-0997">Cell inner membrane</keyword>
<keyword id="KW-1003">Cell membrane</keyword>
<keyword id="KW-0143">Chaperone</keyword>
<keyword id="KW-0472">Membrane</keyword>
<keyword id="KW-0653">Protein transport</keyword>
<keyword id="KW-0812">Transmembrane</keyword>
<keyword id="KW-1133">Transmembrane helix</keyword>
<keyword id="KW-0813">Transport</keyword>
<organism>
    <name type="scientific">Shewanella baltica (strain OS185)</name>
    <dbReference type="NCBI Taxonomy" id="402882"/>
    <lineage>
        <taxon>Bacteria</taxon>
        <taxon>Pseudomonadati</taxon>
        <taxon>Pseudomonadota</taxon>
        <taxon>Gammaproteobacteria</taxon>
        <taxon>Alteromonadales</taxon>
        <taxon>Shewanellaceae</taxon>
        <taxon>Shewanella</taxon>
    </lineage>
</organism>
<proteinExistence type="inferred from homology"/>
<reference key="1">
    <citation type="submission" date="2007-07" db="EMBL/GenBank/DDBJ databases">
        <title>Complete sequence of chromosome of Shewanella baltica OS185.</title>
        <authorList>
            <consortium name="US DOE Joint Genome Institute"/>
            <person name="Copeland A."/>
            <person name="Lucas S."/>
            <person name="Lapidus A."/>
            <person name="Barry K."/>
            <person name="Glavina del Rio T."/>
            <person name="Dalin E."/>
            <person name="Tice H."/>
            <person name="Pitluck S."/>
            <person name="Sims D."/>
            <person name="Brettin T."/>
            <person name="Bruce D."/>
            <person name="Detter J.C."/>
            <person name="Han C."/>
            <person name="Schmutz J."/>
            <person name="Larimer F."/>
            <person name="Land M."/>
            <person name="Hauser L."/>
            <person name="Kyrpides N."/>
            <person name="Mikhailova N."/>
            <person name="Brettar I."/>
            <person name="Rodrigues J."/>
            <person name="Konstantinidis K."/>
            <person name="Tiedje J."/>
            <person name="Richardson P."/>
        </authorList>
    </citation>
    <scope>NUCLEOTIDE SEQUENCE [LARGE SCALE GENOMIC DNA]</scope>
    <source>
        <strain>OS185</strain>
    </source>
</reference>
<name>YIDC_SHEB8</name>
<comment type="function">
    <text evidence="1">Required for the insertion and/or proper folding and/or complex formation of integral membrane proteins into the membrane. Involved in integration of membrane proteins that insert both dependently and independently of the Sec translocase complex, as well as at least some lipoproteins. Aids folding of multispanning membrane proteins.</text>
</comment>
<comment type="subunit">
    <text evidence="1">Interacts with the Sec translocase complex via SecD. Specifically interacts with transmembrane segments of nascent integral membrane proteins during membrane integration.</text>
</comment>
<comment type="subcellular location">
    <subcellularLocation>
        <location evidence="1">Cell inner membrane</location>
        <topology evidence="1">Multi-pass membrane protein</topology>
    </subcellularLocation>
</comment>
<comment type="similarity">
    <text evidence="1">Belongs to the OXA1/ALB3/YidC family. Type 1 subfamily.</text>
</comment>
<protein>
    <recommendedName>
        <fullName evidence="1">Membrane protein insertase YidC</fullName>
    </recommendedName>
    <alternativeName>
        <fullName evidence="1">Foldase YidC</fullName>
    </alternativeName>
    <alternativeName>
        <fullName evidence="1">Membrane integrase YidC</fullName>
    </alternativeName>
    <alternativeName>
        <fullName evidence="1">Membrane protein YidC</fullName>
    </alternativeName>
</protein>
<feature type="chain" id="PRO_1000070167" description="Membrane protein insertase YidC">
    <location>
        <begin position="1"/>
        <end position="541"/>
    </location>
</feature>
<feature type="transmembrane region" description="Helical" evidence="1">
    <location>
        <begin position="6"/>
        <end position="26"/>
    </location>
</feature>
<feature type="transmembrane region" description="Helical" evidence="1">
    <location>
        <begin position="325"/>
        <end position="345"/>
    </location>
</feature>
<feature type="transmembrane region" description="Helical" evidence="1">
    <location>
        <begin position="349"/>
        <end position="369"/>
    </location>
</feature>
<feature type="transmembrane region" description="Helical" evidence="1">
    <location>
        <begin position="420"/>
        <end position="440"/>
    </location>
</feature>
<feature type="transmembrane region" description="Helical" evidence="1">
    <location>
        <begin position="457"/>
        <end position="477"/>
    </location>
</feature>
<feature type="transmembrane region" description="Helical" evidence="1">
    <location>
        <begin position="500"/>
        <end position="520"/>
    </location>
</feature>
<gene>
    <name evidence="1" type="primary">yidC</name>
    <name type="ordered locus">Shew185_4379</name>
</gene>
<accession>A6WUK4</accession>
<sequence>MESQRNILLIGLLFVSFLLWQQWQADKAPKPVATESSLVANAANSHSADVPEADTGVPAAVTATSKLITVKTDQLDVQINPIGGDIVFAALVSHKMEQDKDQPFVLLEQTKDFTYIAQSGLIGRDGIDSSAKGRAAFSTAATEYTLAEGQDTLEVPLTYVADNGVTYTKVFVFHRGKFNVDVDYKINNTSAAPLQVQMYGQIKQTIKPSESSMVMPTYRGGAFSTQDVRYEKYKFDDMAKSNLNQATLGGWAAMLQHYFVSAWIPPATDSNTIFSSVSAGGLANIGFRGAVYDIAPGATQEISSQFYVGPKDQKALSAISDTLNLVVDYGFLWWLAVPIHWLLMFYQSFVGNWGMAIILITLTVRGLLFPLTKAQYTSMAKMRNLQPKLTDLKERFGDDRQKMGQAMMELYKKEKVNPMGGCLPIILQMPIFIALYWVLLESFELRHAPFMLWIHDLSVQDPYYILPLLMGVSMFVMQKMQPIAPTMDPMQVKMMQWMPVIFTVFFLWFPAGLVLYWLVGNIVAITQQKIIYAGLAKKGLK</sequence>
<evidence type="ECO:0000255" key="1">
    <source>
        <dbReference type="HAMAP-Rule" id="MF_01810"/>
    </source>
</evidence>